<name>Y1448_STAEQ</name>
<dbReference type="EMBL" id="CP000029">
    <property type="protein sequence ID" value="AAW54836.1"/>
    <property type="molecule type" value="Genomic_DNA"/>
</dbReference>
<dbReference type="RefSeq" id="WP_001830398.1">
    <property type="nucleotide sequence ID" value="NC_002976.3"/>
</dbReference>
<dbReference type="SMR" id="Q5HN24"/>
<dbReference type="STRING" id="176279.SERP1448"/>
<dbReference type="KEGG" id="ser:SERP1448"/>
<dbReference type="eggNOG" id="COG4843">
    <property type="taxonomic scope" value="Bacteria"/>
</dbReference>
<dbReference type="HOGENOM" id="CLU_106166_1_0_9"/>
<dbReference type="Proteomes" id="UP000000531">
    <property type="component" value="Chromosome"/>
</dbReference>
<dbReference type="GO" id="GO:0005886">
    <property type="term" value="C:plasma membrane"/>
    <property type="evidence" value="ECO:0007669"/>
    <property type="project" value="UniProtKB-SubCell"/>
</dbReference>
<dbReference type="CDD" id="cd16381">
    <property type="entry name" value="YitT_C_like_1"/>
    <property type="match status" value="1"/>
</dbReference>
<dbReference type="HAMAP" id="MF_01515">
    <property type="entry name" value="UPF0316"/>
    <property type="match status" value="1"/>
</dbReference>
<dbReference type="InterPro" id="IPR019264">
    <property type="entry name" value="DUF2179"/>
</dbReference>
<dbReference type="InterPro" id="IPR044035">
    <property type="entry name" value="DUF5698"/>
</dbReference>
<dbReference type="InterPro" id="IPR022930">
    <property type="entry name" value="UPF0316"/>
</dbReference>
<dbReference type="NCBIfam" id="NF003190">
    <property type="entry name" value="PRK04164.1-1"/>
    <property type="match status" value="1"/>
</dbReference>
<dbReference type="NCBIfam" id="NF003194">
    <property type="entry name" value="PRK04164.1-5"/>
    <property type="match status" value="1"/>
</dbReference>
<dbReference type="PANTHER" id="PTHR40060">
    <property type="entry name" value="UPF0316 PROTEIN YEBE"/>
    <property type="match status" value="1"/>
</dbReference>
<dbReference type="PANTHER" id="PTHR40060:SF1">
    <property type="entry name" value="UPF0316 PROTEIN YEBE"/>
    <property type="match status" value="1"/>
</dbReference>
<dbReference type="Pfam" id="PF10035">
    <property type="entry name" value="DUF2179"/>
    <property type="match status" value="1"/>
</dbReference>
<dbReference type="Pfam" id="PF18955">
    <property type="entry name" value="DUF5698"/>
    <property type="match status" value="1"/>
</dbReference>
<sequence length="208" mass="23482">MSAIAQNPWLMVLAIFIINVCYVTFLTMRTILTLKGYRYVAAVVSFMEVLVYVVGLGLVMSSLDQIQNIFAYALGFSVGIIVGMKIEEKLALGYTVVNVTSSEYELDLPNELRNLGYGVTHYEAFGRDGSRMVMQILTPRKYELKLMDTVKNLDPKAFIIAYEPRNIHGGFWVKGVRKRKLKAYEPEQLEVVVDHEEIVGGSSNEQKV</sequence>
<comment type="subcellular location">
    <subcellularLocation>
        <location evidence="1">Cell membrane</location>
        <topology evidence="1">Multi-pass membrane protein</topology>
    </subcellularLocation>
</comment>
<comment type="similarity">
    <text evidence="1">Belongs to the UPF0316 family.</text>
</comment>
<accession>Q5HN24</accession>
<evidence type="ECO:0000255" key="1">
    <source>
        <dbReference type="HAMAP-Rule" id="MF_01515"/>
    </source>
</evidence>
<reference key="1">
    <citation type="journal article" date="2005" name="J. Bacteriol.">
        <title>Insights on evolution of virulence and resistance from the complete genome analysis of an early methicillin-resistant Staphylococcus aureus strain and a biofilm-producing methicillin-resistant Staphylococcus epidermidis strain.</title>
        <authorList>
            <person name="Gill S.R."/>
            <person name="Fouts D.E."/>
            <person name="Archer G.L."/>
            <person name="Mongodin E.F."/>
            <person name="DeBoy R.T."/>
            <person name="Ravel J."/>
            <person name="Paulsen I.T."/>
            <person name="Kolonay J.F."/>
            <person name="Brinkac L.M."/>
            <person name="Beanan M.J."/>
            <person name="Dodson R.J."/>
            <person name="Daugherty S.C."/>
            <person name="Madupu R."/>
            <person name="Angiuoli S.V."/>
            <person name="Durkin A.S."/>
            <person name="Haft D.H."/>
            <person name="Vamathevan J.J."/>
            <person name="Khouri H."/>
            <person name="Utterback T.R."/>
            <person name="Lee C."/>
            <person name="Dimitrov G."/>
            <person name="Jiang L."/>
            <person name="Qin H."/>
            <person name="Weidman J."/>
            <person name="Tran K."/>
            <person name="Kang K.H."/>
            <person name="Hance I.R."/>
            <person name="Nelson K.E."/>
            <person name="Fraser C.M."/>
        </authorList>
    </citation>
    <scope>NUCLEOTIDE SEQUENCE [LARGE SCALE GENOMIC DNA]</scope>
    <source>
        <strain>ATCC 35984 / DSM 28319 / BCRC 17069 / CCUG 31568 / BM 3577 / RP62A</strain>
    </source>
</reference>
<keyword id="KW-1003">Cell membrane</keyword>
<keyword id="KW-0472">Membrane</keyword>
<keyword id="KW-1185">Reference proteome</keyword>
<keyword id="KW-0812">Transmembrane</keyword>
<keyword id="KW-1133">Transmembrane helix</keyword>
<feature type="chain" id="PRO_0000171957" description="UPF0316 protein SERP1448">
    <location>
        <begin position="1"/>
        <end position="208"/>
    </location>
</feature>
<feature type="transmembrane region" description="Helical" evidence="1">
    <location>
        <begin position="8"/>
        <end position="28"/>
    </location>
</feature>
<feature type="transmembrane region" description="Helical" evidence="1">
    <location>
        <begin position="40"/>
        <end position="60"/>
    </location>
</feature>
<feature type="transmembrane region" description="Helical" evidence="1">
    <location>
        <begin position="66"/>
        <end position="86"/>
    </location>
</feature>
<proteinExistence type="inferred from homology"/>
<gene>
    <name type="ordered locus">SERP1448</name>
</gene>
<protein>
    <recommendedName>
        <fullName evidence="1">UPF0316 protein SERP1448</fullName>
    </recommendedName>
</protein>
<organism>
    <name type="scientific">Staphylococcus epidermidis (strain ATCC 35984 / DSM 28319 / BCRC 17069 / CCUG 31568 / BM 3577 / RP62A)</name>
    <dbReference type="NCBI Taxonomy" id="176279"/>
    <lineage>
        <taxon>Bacteria</taxon>
        <taxon>Bacillati</taxon>
        <taxon>Bacillota</taxon>
        <taxon>Bacilli</taxon>
        <taxon>Bacillales</taxon>
        <taxon>Staphylococcaceae</taxon>
        <taxon>Staphylococcus</taxon>
    </lineage>
</organism>